<name>Y1155_PSEP1</name>
<feature type="chain" id="PRO_1000061300" description="UPF0225 protein Pput_1155">
    <location>
        <begin position="1"/>
        <end position="158"/>
    </location>
</feature>
<sequence length="158" mass="17088">MSVSVCPCGSGNLLDACCGHYHAGTPAPDAQALMRSRYSAYVLGLVDYLVATTLPAQQAGLDRAAMADWSAQSTWLGLEVESAEVLGGQPEHSFVTFTARWHDQDGDHQHRERSAFVQHAGRWYFIDPTVGLKAGRNDPCPCASGHKFKKCCASYVGN</sequence>
<dbReference type="EMBL" id="CP000712">
    <property type="protein sequence ID" value="ABQ77316.1"/>
    <property type="molecule type" value="Genomic_DNA"/>
</dbReference>
<dbReference type="SMR" id="A5VZK6"/>
<dbReference type="KEGG" id="ppf:Pput_1155"/>
<dbReference type="eggNOG" id="COG3012">
    <property type="taxonomic scope" value="Bacteria"/>
</dbReference>
<dbReference type="HOGENOM" id="CLU_099590_0_1_6"/>
<dbReference type="Gene3D" id="3.10.450.50">
    <property type="match status" value="1"/>
</dbReference>
<dbReference type="HAMAP" id="MF_00612">
    <property type="entry name" value="UPF0225"/>
    <property type="match status" value="1"/>
</dbReference>
<dbReference type="InterPro" id="IPR032710">
    <property type="entry name" value="NTF2-like_dom_sf"/>
</dbReference>
<dbReference type="InterPro" id="IPR004027">
    <property type="entry name" value="SEC_C_motif"/>
</dbReference>
<dbReference type="InterPro" id="IPR023006">
    <property type="entry name" value="UPF0225"/>
</dbReference>
<dbReference type="InterPro" id="IPR048469">
    <property type="entry name" value="YchJ-like_M"/>
</dbReference>
<dbReference type="NCBIfam" id="NF001213">
    <property type="entry name" value="PRK00183.1"/>
    <property type="match status" value="1"/>
</dbReference>
<dbReference type="NCBIfam" id="NF002449">
    <property type="entry name" value="PRK01617.1"/>
    <property type="match status" value="1"/>
</dbReference>
<dbReference type="NCBIfam" id="NF002486">
    <property type="entry name" value="PRK01752.1"/>
    <property type="match status" value="1"/>
</dbReference>
<dbReference type="PANTHER" id="PTHR33747:SF1">
    <property type="entry name" value="ADENYLATE CYCLASE-ASSOCIATED CAP C-TERMINAL DOMAIN-CONTAINING PROTEIN"/>
    <property type="match status" value="1"/>
</dbReference>
<dbReference type="PANTHER" id="PTHR33747">
    <property type="entry name" value="UPF0225 PROTEIN SCO1677"/>
    <property type="match status" value="1"/>
</dbReference>
<dbReference type="Pfam" id="PF02810">
    <property type="entry name" value="SEC-C"/>
    <property type="match status" value="1"/>
</dbReference>
<dbReference type="Pfam" id="PF17775">
    <property type="entry name" value="YchJ_M-like"/>
    <property type="match status" value="1"/>
</dbReference>
<dbReference type="SUPFAM" id="SSF54427">
    <property type="entry name" value="NTF2-like"/>
    <property type="match status" value="1"/>
</dbReference>
<dbReference type="SUPFAM" id="SSF103642">
    <property type="entry name" value="Sec-C motif"/>
    <property type="match status" value="1"/>
</dbReference>
<reference key="1">
    <citation type="submission" date="2007-05" db="EMBL/GenBank/DDBJ databases">
        <title>Complete sequence of Pseudomonas putida F1.</title>
        <authorList>
            <consortium name="US DOE Joint Genome Institute"/>
            <person name="Copeland A."/>
            <person name="Lucas S."/>
            <person name="Lapidus A."/>
            <person name="Barry K."/>
            <person name="Detter J.C."/>
            <person name="Glavina del Rio T."/>
            <person name="Hammon N."/>
            <person name="Israni S."/>
            <person name="Dalin E."/>
            <person name="Tice H."/>
            <person name="Pitluck S."/>
            <person name="Chain P."/>
            <person name="Malfatti S."/>
            <person name="Shin M."/>
            <person name="Vergez L."/>
            <person name="Schmutz J."/>
            <person name="Larimer F."/>
            <person name="Land M."/>
            <person name="Hauser L."/>
            <person name="Kyrpides N."/>
            <person name="Lykidis A."/>
            <person name="Parales R."/>
            <person name="Richardson P."/>
        </authorList>
    </citation>
    <scope>NUCLEOTIDE SEQUENCE [LARGE SCALE GENOMIC DNA]</scope>
    <source>
        <strain>ATCC 700007 / DSM 6899 / JCM 31910 / BCRC 17059 / LMG 24140 / F1</strain>
    </source>
</reference>
<gene>
    <name type="ordered locus">Pput_1155</name>
</gene>
<organism>
    <name type="scientific">Pseudomonas putida (strain ATCC 700007 / DSM 6899 / JCM 31910 / BCRC 17059 / LMG 24140 / F1)</name>
    <dbReference type="NCBI Taxonomy" id="351746"/>
    <lineage>
        <taxon>Bacteria</taxon>
        <taxon>Pseudomonadati</taxon>
        <taxon>Pseudomonadota</taxon>
        <taxon>Gammaproteobacteria</taxon>
        <taxon>Pseudomonadales</taxon>
        <taxon>Pseudomonadaceae</taxon>
        <taxon>Pseudomonas</taxon>
    </lineage>
</organism>
<comment type="similarity">
    <text evidence="1">Belongs to the UPF0225 family.</text>
</comment>
<accession>A5VZK6</accession>
<protein>
    <recommendedName>
        <fullName evidence="1">UPF0225 protein Pput_1155</fullName>
    </recommendedName>
</protein>
<evidence type="ECO:0000255" key="1">
    <source>
        <dbReference type="HAMAP-Rule" id="MF_00612"/>
    </source>
</evidence>
<proteinExistence type="inferred from homology"/>